<protein>
    <recommendedName>
        <fullName evidence="1">Dihydroorotate dehydrogenase (quinone)</fullName>
        <ecNumber evidence="1">1.3.5.2</ecNumber>
    </recommendedName>
    <alternativeName>
        <fullName evidence="1">DHOdehase</fullName>
        <shortName evidence="1">DHOD</shortName>
        <shortName evidence="1">DHODase</shortName>
    </alternativeName>
    <alternativeName>
        <fullName evidence="1">Dihydroorotate oxidase</fullName>
    </alternativeName>
</protein>
<dbReference type="EC" id="1.3.5.2" evidence="1"/>
<dbReference type="EMBL" id="CP000325">
    <property type="protein sequence ID" value="ABL04734.1"/>
    <property type="molecule type" value="Genomic_DNA"/>
</dbReference>
<dbReference type="RefSeq" id="WP_011740350.1">
    <property type="nucleotide sequence ID" value="NC_008611.1"/>
</dbReference>
<dbReference type="SMR" id="A0PQW5"/>
<dbReference type="KEGG" id="mul:MUL_2370"/>
<dbReference type="eggNOG" id="COG0167">
    <property type="taxonomic scope" value="Bacteria"/>
</dbReference>
<dbReference type="HOGENOM" id="CLU_013640_2_0_11"/>
<dbReference type="UniPathway" id="UPA00070">
    <property type="reaction ID" value="UER00946"/>
</dbReference>
<dbReference type="Proteomes" id="UP000000765">
    <property type="component" value="Chromosome"/>
</dbReference>
<dbReference type="GO" id="GO:0005737">
    <property type="term" value="C:cytoplasm"/>
    <property type="evidence" value="ECO:0007669"/>
    <property type="project" value="InterPro"/>
</dbReference>
<dbReference type="GO" id="GO:0005886">
    <property type="term" value="C:plasma membrane"/>
    <property type="evidence" value="ECO:0007669"/>
    <property type="project" value="UniProtKB-SubCell"/>
</dbReference>
<dbReference type="GO" id="GO:0106430">
    <property type="term" value="F:dihydroorotate dehydrogenase (quinone) activity"/>
    <property type="evidence" value="ECO:0007669"/>
    <property type="project" value="UniProtKB-EC"/>
</dbReference>
<dbReference type="GO" id="GO:0006207">
    <property type="term" value="P:'de novo' pyrimidine nucleobase biosynthetic process"/>
    <property type="evidence" value="ECO:0007669"/>
    <property type="project" value="InterPro"/>
</dbReference>
<dbReference type="GO" id="GO:0044205">
    <property type="term" value="P:'de novo' UMP biosynthetic process"/>
    <property type="evidence" value="ECO:0007669"/>
    <property type="project" value="UniProtKB-UniRule"/>
</dbReference>
<dbReference type="CDD" id="cd04738">
    <property type="entry name" value="DHOD_2_like"/>
    <property type="match status" value="1"/>
</dbReference>
<dbReference type="FunFam" id="3.20.20.70:FF:000123">
    <property type="entry name" value="Dihydroorotate dehydrogenase (quinone)"/>
    <property type="match status" value="1"/>
</dbReference>
<dbReference type="Gene3D" id="3.20.20.70">
    <property type="entry name" value="Aldolase class I"/>
    <property type="match status" value="1"/>
</dbReference>
<dbReference type="HAMAP" id="MF_00225">
    <property type="entry name" value="DHO_dh_type2"/>
    <property type="match status" value="1"/>
</dbReference>
<dbReference type="InterPro" id="IPR013785">
    <property type="entry name" value="Aldolase_TIM"/>
</dbReference>
<dbReference type="InterPro" id="IPR050074">
    <property type="entry name" value="DHO_dehydrogenase"/>
</dbReference>
<dbReference type="InterPro" id="IPR005719">
    <property type="entry name" value="Dihydroorotate_DH_2"/>
</dbReference>
<dbReference type="InterPro" id="IPR005720">
    <property type="entry name" value="Dihydroorotate_DH_cat"/>
</dbReference>
<dbReference type="InterPro" id="IPR001295">
    <property type="entry name" value="Dihydroorotate_DH_CS"/>
</dbReference>
<dbReference type="NCBIfam" id="NF003648">
    <property type="entry name" value="PRK05286.2-1"/>
    <property type="match status" value="1"/>
</dbReference>
<dbReference type="NCBIfam" id="NF003652">
    <property type="entry name" value="PRK05286.2-5"/>
    <property type="match status" value="1"/>
</dbReference>
<dbReference type="NCBIfam" id="TIGR01036">
    <property type="entry name" value="pyrD_sub2"/>
    <property type="match status" value="1"/>
</dbReference>
<dbReference type="PANTHER" id="PTHR48109:SF4">
    <property type="entry name" value="DIHYDROOROTATE DEHYDROGENASE (QUINONE), MITOCHONDRIAL"/>
    <property type="match status" value="1"/>
</dbReference>
<dbReference type="PANTHER" id="PTHR48109">
    <property type="entry name" value="DIHYDROOROTATE DEHYDROGENASE (QUINONE), MITOCHONDRIAL-RELATED"/>
    <property type="match status" value="1"/>
</dbReference>
<dbReference type="Pfam" id="PF01180">
    <property type="entry name" value="DHO_dh"/>
    <property type="match status" value="1"/>
</dbReference>
<dbReference type="SUPFAM" id="SSF51395">
    <property type="entry name" value="FMN-linked oxidoreductases"/>
    <property type="match status" value="1"/>
</dbReference>
<dbReference type="PROSITE" id="PS00911">
    <property type="entry name" value="DHODEHASE_1"/>
    <property type="match status" value="1"/>
</dbReference>
<dbReference type="PROSITE" id="PS00912">
    <property type="entry name" value="DHODEHASE_2"/>
    <property type="match status" value="1"/>
</dbReference>
<comment type="function">
    <text evidence="1">Catalyzes the conversion of dihydroorotate to orotate with quinone as electron acceptor.</text>
</comment>
<comment type="catalytic activity">
    <reaction evidence="1">
        <text>(S)-dihydroorotate + a quinone = orotate + a quinol</text>
        <dbReference type="Rhea" id="RHEA:30187"/>
        <dbReference type="ChEBI" id="CHEBI:24646"/>
        <dbReference type="ChEBI" id="CHEBI:30839"/>
        <dbReference type="ChEBI" id="CHEBI:30864"/>
        <dbReference type="ChEBI" id="CHEBI:132124"/>
        <dbReference type="EC" id="1.3.5.2"/>
    </reaction>
</comment>
<comment type="cofactor">
    <cofactor evidence="1">
        <name>FMN</name>
        <dbReference type="ChEBI" id="CHEBI:58210"/>
    </cofactor>
    <text evidence="1">Binds 1 FMN per subunit.</text>
</comment>
<comment type="pathway">
    <text evidence="1">Pyrimidine metabolism; UMP biosynthesis via de novo pathway; orotate from (S)-dihydroorotate (quinone route): step 1/1.</text>
</comment>
<comment type="subunit">
    <text evidence="1">Monomer.</text>
</comment>
<comment type="subcellular location">
    <subcellularLocation>
        <location evidence="1">Cell membrane</location>
        <topology evidence="1">Peripheral membrane protein</topology>
    </subcellularLocation>
</comment>
<comment type="similarity">
    <text evidence="1">Belongs to the dihydroorotate dehydrogenase family. Type 2 subfamily.</text>
</comment>
<evidence type="ECO:0000255" key="1">
    <source>
        <dbReference type="HAMAP-Rule" id="MF_00225"/>
    </source>
</evidence>
<organism>
    <name type="scientific">Mycobacterium ulcerans (strain Agy99)</name>
    <dbReference type="NCBI Taxonomy" id="362242"/>
    <lineage>
        <taxon>Bacteria</taxon>
        <taxon>Bacillati</taxon>
        <taxon>Actinomycetota</taxon>
        <taxon>Actinomycetes</taxon>
        <taxon>Mycobacteriales</taxon>
        <taxon>Mycobacteriaceae</taxon>
        <taxon>Mycobacterium</taxon>
        <taxon>Mycobacterium ulcerans group</taxon>
    </lineage>
</organism>
<proteinExistence type="inferred from homology"/>
<accession>A0PQW5</accession>
<keyword id="KW-1003">Cell membrane</keyword>
<keyword id="KW-0285">Flavoprotein</keyword>
<keyword id="KW-0288">FMN</keyword>
<keyword id="KW-0472">Membrane</keyword>
<keyword id="KW-0560">Oxidoreductase</keyword>
<keyword id="KW-0665">Pyrimidine biosynthesis</keyword>
<feature type="chain" id="PRO_1000024187" description="Dihydroorotate dehydrogenase (quinone)">
    <location>
        <begin position="1"/>
        <end position="360"/>
    </location>
</feature>
<feature type="active site" description="Nucleophile" evidence="1">
    <location>
        <position position="179"/>
    </location>
</feature>
<feature type="binding site" evidence="1">
    <location>
        <begin position="66"/>
        <end position="70"/>
    </location>
    <ligand>
        <name>FMN</name>
        <dbReference type="ChEBI" id="CHEBI:58210"/>
    </ligand>
</feature>
<feature type="binding site" evidence="1">
    <location>
        <position position="70"/>
    </location>
    <ligand>
        <name>substrate</name>
    </ligand>
</feature>
<feature type="binding site" evidence="1">
    <location>
        <position position="90"/>
    </location>
    <ligand>
        <name>FMN</name>
        <dbReference type="ChEBI" id="CHEBI:58210"/>
    </ligand>
</feature>
<feature type="binding site" evidence="1">
    <location>
        <begin position="115"/>
        <end position="119"/>
    </location>
    <ligand>
        <name>substrate</name>
    </ligand>
</feature>
<feature type="binding site" evidence="1">
    <location>
        <position position="143"/>
    </location>
    <ligand>
        <name>FMN</name>
        <dbReference type="ChEBI" id="CHEBI:58210"/>
    </ligand>
</feature>
<feature type="binding site" evidence="1">
    <location>
        <position position="176"/>
    </location>
    <ligand>
        <name>FMN</name>
        <dbReference type="ChEBI" id="CHEBI:58210"/>
    </ligand>
</feature>
<feature type="binding site" evidence="1">
    <location>
        <position position="176"/>
    </location>
    <ligand>
        <name>substrate</name>
    </ligand>
</feature>
<feature type="binding site" evidence="1">
    <location>
        <position position="181"/>
    </location>
    <ligand>
        <name>substrate</name>
    </ligand>
</feature>
<feature type="binding site" evidence="1">
    <location>
        <position position="212"/>
    </location>
    <ligand>
        <name>FMN</name>
        <dbReference type="ChEBI" id="CHEBI:58210"/>
    </ligand>
</feature>
<feature type="binding site" evidence="1">
    <location>
        <position position="240"/>
    </location>
    <ligand>
        <name>FMN</name>
        <dbReference type="ChEBI" id="CHEBI:58210"/>
    </ligand>
</feature>
<feature type="binding site" evidence="1">
    <location>
        <begin position="241"/>
        <end position="242"/>
    </location>
    <ligand>
        <name>substrate</name>
    </ligand>
</feature>
<feature type="binding site" evidence="1">
    <location>
        <position position="264"/>
    </location>
    <ligand>
        <name>FMN</name>
        <dbReference type="ChEBI" id="CHEBI:58210"/>
    </ligand>
</feature>
<feature type="binding site" evidence="1">
    <location>
        <position position="293"/>
    </location>
    <ligand>
        <name>FMN</name>
        <dbReference type="ChEBI" id="CHEBI:58210"/>
    </ligand>
</feature>
<feature type="binding site" evidence="1">
    <location>
        <begin position="314"/>
        <end position="315"/>
    </location>
    <ligand>
        <name>FMN</name>
        <dbReference type="ChEBI" id="CHEBI:58210"/>
    </ligand>
</feature>
<name>PYRD_MYCUA</name>
<sequence>MYCLLRRLLFLLPPEWVHKLVFAVLRGATAATPVRRMLTRWLGPTDPVLASTVFGVRFPGPLGLAAGFDKDGTGLDTWAAMGFGYAEVGTVTAHPQPGNPAPRLFRLPEDRALLNRMGFNNHGAGALAIRLACHHPEVPVGVNIGKTKTTPADQAVDDYRASARLVGPLASYLVVNVSSPNTPGLRDLQAVESLRPILAAVLAETSTPVLVKIAPDLSDSDVDEVADLAVELGLAGIVATNTTVSRDGLLTPGVGQLGAGGISGPPVAERSLEVLRRLYQRVGDRLTLISVGGIETAEDAWDRITAGASLLQGYTGFIYGGGLWSKHIHDGIARRLHQGGFGSLHEAVGSNAAERGRPPS</sequence>
<gene>
    <name evidence="1" type="primary">pyrD</name>
    <name type="ordered locus">MUL_2370</name>
</gene>
<reference key="1">
    <citation type="journal article" date="2007" name="Genome Res.">
        <title>Reductive evolution and niche adaptation inferred from the genome of Mycobacterium ulcerans, the causative agent of Buruli ulcer.</title>
        <authorList>
            <person name="Stinear T.P."/>
            <person name="Seemann T."/>
            <person name="Pidot S."/>
            <person name="Frigui W."/>
            <person name="Reysset G."/>
            <person name="Garnier T."/>
            <person name="Meurice G."/>
            <person name="Simon D."/>
            <person name="Bouchier C."/>
            <person name="Ma L."/>
            <person name="Tichit M."/>
            <person name="Porter J.L."/>
            <person name="Ryan J."/>
            <person name="Johnson P.D.R."/>
            <person name="Davies J.K."/>
            <person name="Jenkin G.A."/>
            <person name="Small P.L.C."/>
            <person name="Jones L.M."/>
            <person name="Tekaia F."/>
            <person name="Laval F."/>
            <person name="Daffe M."/>
            <person name="Parkhill J."/>
            <person name="Cole S.T."/>
        </authorList>
    </citation>
    <scope>NUCLEOTIDE SEQUENCE [LARGE SCALE GENOMIC DNA]</scope>
    <source>
        <strain>Agy99</strain>
    </source>
</reference>